<protein>
    <recommendedName>
        <fullName evidence="1">DNA gyrase inhibitor YacG</fullName>
    </recommendedName>
</protein>
<comment type="function">
    <text evidence="1">Inhibits all the catalytic activities of DNA gyrase by preventing its interaction with DNA. Acts by binding directly to the C-terminal domain of GyrB, which probably disrupts DNA binding by the gyrase.</text>
</comment>
<comment type="cofactor">
    <cofactor evidence="1">
        <name>Zn(2+)</name>
        <dbReference type="ChEBI" id="CHEBI:29105"/>
    </cofactor>
    <text evidence="1">Binds 1 zinc ion.</text>
</comment>
<comment type="subunit">
    <text evidence="1">Interacts with GyrB.</text>
</comment>
<comment type="similarity">
    <text evidence="1">Belongs to the DNA gyrase inhibitor YacG family.</text>
</comment>
<evidence type="ECO:0000255" key="1">
    <source>
        <dbReference type="HAMAP-Rule" id="MF_00649"/>
    </source>
</evidence>
<gene>
    <name evidence="1" type="primary">yacG</name>
    <name type="ordered locus">bsr1260</name>
</gene>
<reference key="1">
    <citation type="journal article" date="2002" name="DNA Res.">
        <title>Complete genomic sequence of nitrogen-fixing symbiotic bacterium Bradyrhizobium japonicum USDA110.</title>
        <authorList>
            <person name="Kaneko T."/>
            <person name="Nakamura Y."/>
            <person name="Sato S."/>
            <person name="Minamisawa K."/>
            <person name="Uchiumi T."/>
            <person name="Sasamoto S."/>
            <person name="Watanabe A."/>
            <person name="Idesawa K."/>
            <person name="Iriguchi M."/>
            <person name="Kawashima K."/>
            <person name="Kohara M."/>
            <person name="Matsumoto M."/>
            <person name="Shimpo S."/>
            <person name="Tsuruoka H."/>
            <person name="Wada T."/>
            <person name="Yamada M."/>
            <person name="Tabata S."/>
        </authorList>
    </citation>
    <scope>NUCLEOTIDE SEQUENCE [LARGE SCALE GENOMIC DNA]</scope>
    <source>
        <strain>JCM 10833 / BCRC 13528 / IAM 13628 / NBRC 14792 / USDA 110</strain>
    </source>
</reference>
<feature type="chain" id="PRO_0000211690" description="DNA gyrase inhibitor YacG">
    <location>
        <begin position="1"/>
        <end position="60"/>
    </location>
</feature>
<feature type="binding site" evidence="1">
    <location>
        <position position="15"/>
    </location>
    <ligand>
        <name>Zn(2+)</name>
        <dbReference type="ChEBI" id="CHEBI:29105"/>
    </ligand>
</feature>
<feature type="binding site" evidence="1">
    <location>
        <position position="18"/>
    </location>
    <ligand>
        <name>Zn(2+)</name>
        <dbReference type="ChEBI" id="CHEBI:29105"/>
    </ligand>
</feature>
<feature type="binding site" evidence="1">
    <location>
        <position position="30"/>
    </location>
    <ligand>
        <name>Zn(2+)</name>
        <dbReference type="ChEBI" id="CHEBI:29105"/>
    </ligand>
</feature>
<feature type="binding site" evidence="1">
    <location>
        <position position="34"/>
    </location>
    <ligand>
        <name>Zn(2+)</name>
        <dbReference type="ChEBI" id="CHEBI:29105"/>
    </ligand>
</feature>
<keyword id="KW-0479">Metal-binding</keyword>
<keyword id="KW-1185">Reference proteome</keyword>
<keyword id="KW-0862">Zinc</keyword>
<dbReference type="EMBL" id="BA000040">
    <property type="protein sequence ID" value="BAC46525.1"/>
    <property type="molecule type" value="Genomic_DNA"/>
</dbReference>
<dbReference type="RefSeq" id="NP_767900.1">
    <property type="nucleotide sequence ID" value="NC_004463.1"/>
</dbReference>
<dbReference type="RefSeq" id="WP_011084078.1">
    <property type="nucleotide sequence ID" value="NC_004463.1"/>
</dbReference>
<dbReference type="SMR" id="Q89UZ9"/>
<dbReference type="STRING" id="224911.AAV28_03195"/>
<dbReference type="EnsemblBacteria" id="BAC46525">
    <property type="protein sequence ID" value="BAC46525"/>
    <property type="gene ID" value="BAC46525"/>
</dbReference>
<dbReference type="GeneID" id="46488533"/>
<dbReference type="KEGG" id="bja:bsr1260"/>
<dbReference type="PATRIC" id="fig|224911.44.peg.669"/>
<dbReference type="eggNOG" id="COG3024">
    <property type="taxonomic scope" value="Bacteria"/>
</dbReference>
<dbReference type="HOGENOM" id="CLU_178280_2_0_5"/>
<dbReference type="InParanoid" id="Q89UZ9"/>
<dbReference type="OrthoDB" id="9809663at2"/>
<dbReference type="PhylomeDB" id="Q89UZ9"/>
<dbReference type="Proteomes" id="UP000002526">
    <property type="component" value="Chromosome"/>
</dbReference>
<dbReference type="GO" id="GO:0008657">
    <property type="term" value="F:DNA topoisomerase type II (double strand cut, ATP-hydrolyzing) inhibitor activity"/>
    <property type="evidence" value="ECO:0000318"/>
    <property type="project" value="GO_Central"/>
</dbReference>
<dbReference type="GO" id="GO:0008270">
    <property type="term" value="F:zinc ion binding"/>
    <property type="evidence" value="ECO:0007669"/>
    <property type="project" value="UniProtKB-UniRule"/>
</dbReference>
<dbReference type="GO" id="GO:0006355">
    <property type="term" value="P:regulation of DNA-templated transcription"/>
    <property type="evidence" value="ECO:0007669"/>
    <property type="project" value="InterPro"/>
</dbReference>
<dbReference type="Gene3D" id="3.30.50.10">
    <property type="entry name" value="Erythroid Transcription Factor GATA-1, subunit A"/>
    <property type="match status" value="1"/>
</dbReference>
<dbReference type="HAMAP" id="MF_00649">
    <property type="entry name" value="DNA_gyrase_inhibitor_YacG"/>
    <property type="match status" value="1"/>
</dbReference>
<dbReference type="InterPro" id="IPR005584">
    <property type="entry name" value="DNA_gyrase_inhibitor_YacG"/>
</dbReference>
<dbReference type="InterPro" id="IPR013088">
    <property type="entry name" value="Znf_NHR/GATA"/>
</dbReference>
<dbReference type="NCBIfam" id="NF002362">
    <property type="entry name" value="PRK01343.1"/>
    <property type="match status" value="1"/>
</dbReference>
<dbReference type="PANTHER" id="PTHR36150">
    <property type="entry name" value="DNA GYRASE INHIBITOR YACG"/>
    <property type="match status" value="1"/>
</dbReference>
<dbReference type="PANTHER" id="PTHR36150:SF1">
    <property type="entry name" value="DNA GYRASE INHIBITOR YACG"/>
    <property type="match status" value="1"/>
</dbReference>
<dbReference type="Pfam" id="PF03884">
    <property type="entry name" value="YacG"/>
    <property type="match status" value="1"/>
</dbReference>
<dbReference type="SUPFAM" id="SSF57716">
    <property type="entry name" value="Glucocorticoid receptor-like (DNA-binding domain)"/>
    <property type="match status" value="1"/>
</dbReference>
<organism>
    <name type="scientific">Bradyrhizobium diazoefficiens (strain JCM 10833 / BCRC 13528 / IAM 13628 / NBRC 14792 / USDA 110)</name>
    <dbReference type="NCBI Taxonomy" id="224911"/>
    <lineage>
        <taxon>Bacteria</taxon>
        <taxon>Pseudomonadati</taxon>
        <taxon>Pseudomonadota</taxon>
        <taxon>Alphaproteobacteria</taxon>
        <taxon>Hyphomicrobiales</taxon>
        <taxon>Nitrobacteraceae</taxon>
        <taxon>Bradyrhizobium</taxon>
    </lineage>
</organism>
<name>YACG_BRADU</name>
<sequence length="60" mass="6692">MDDQVKMPTGPLKTCPICGKPAVQATHPFCSSRCRDVDLNRWLKGSYVIPGRDDEVDDVE</sequence>
<proteinExistence type="inferred from homology"/>
<accession>Q89UZ9</accession>